<keyword id="KW-0007">Acetylation</keyword>
<keyword id="KW-0963">Cytoplasm</keyword>
<keyword id="KW-0342">GTP-binding</keyword>
<keyword id="KW-0396">Initiation factor</keyword>
<keyword id="KW-0547">Nucleotide-binding</keyword>
<keyword id="KW-0648">Protein biosynthesis</keyword>
<comment type="function">
    <text evidence="2">One of the essential components for the initiation of protein synthesis. Protects formylmethionyl-tRNA from spontaneous hydrolysis and promotes its binding to the 30S ribosomal subunits. Also involved in the hydrolysis of GTP during the formation of the 70S ribosomal complex.</text>
</comment>
<comment type="subcellular location">
    <subcellularLocation>
        <location evidence="2">Cytoplasm</location>
    </subcellularLocation>
</comment>
<comment type="similarity">
    <text evidence="2">Belongs to the TRAFAC class translation factor GTPase superfamily. Classic translation factor GTPase family. IF-2 subfamily.</text>
</comment>
<proteinExistence type="inferred from homology"/>
<gene>
    <name evidence="2" type="primary">infB</name>
    <name type="ordered locus">ECED1_3828</name>
</gene>
<dbReference type="EMBL" id="CU928162">
    <property type="protein sequence ID" value="CAR09971.2"/>
    <property type="molecule type" value="Genomic_DNA"/>
</dbReference>
<dbReference type="RefSeq" id="WP_000133039.1">
    <property type="nucleotide sequence ID" value="NC_011745.1"/>
</dbReference>
<dbReference type="SMR" id="B7N0V3"/>
<dbReference type="KEGG" id="ecq:ECED1_3828"/>
<dbReference type="HOGENOM" id="CLU_006301_6_3_6"/>
<dbReference type="Proteomes" id="UP000000748">
    <property type="component" value="Chromosome"/>
</dbReference>
<dbReference type="GO" id="GO:0005829">
    <property type="term" value="C:cytosol"/>
    <property type="evidence" value="ECO:0007669"/>
    <property type="project" value="TreeGrafter"/>
</dbReference>
<dbReference type="GO" id="GO:0005525">
    <property type="term" value="F:GTP binding"/>
    <property type="evidence" value="ECO:0007669"/>
    <property type="project" value="UniProtKB-KW"/>
</dbReference>
<dbReference type="GO" id="GO:0003924">
    <property type="term" value="F:GTPase activity"/>
    <property type="evidence" value="ECO:0007669"/>
    <property type="project" value="UniProtKB-UniRule"/>
</dbReference>
<dbReference type="GO" id="GO:0097216">
    <property type="term" value="F:guanosine tetraphosphate binding"/>
    <property type="evidence" value="ECO:0007669"/>
    <property type="project" value="UniProtKB-ARBA"/>
</dbReference>
<dbReference type="GO" id="GO:0003743">
    <property type="term" value="F:translation initiation factor activity"/>
    <property type="evidence" value="ECO:0007669"/>
    <property type="project" value="UniProtKB-UniRule"/>
</dbReference>
<dbReference type="CDD" id="cd01887">
    <property type="entry name" value="IF2_eIF5B"/>
    <property type="match status" value="1"/>
</dbReference>
<dbReference type="CDD" id="cd03702">
    <property type="entry name" value="IF2_mtIF2_II"/>
    <property type="match status" value="1"/>
</dbReference>
<dbReference type="CDD" id="cd03692">
    <property type="entry name" value="mtIF2_IVc"/>
    <property type="match status" value="1"/>
</dbReference>
<dbReference type="FunFam" id="2.40.30.10:FF:000007">
    <property type="entry name" value="Translation initiation factor IF-2"/>
    <property type="match status" value="1"/>
</dbReference>
<dbReference type="FunFam" id="2.40.30.10:FF:000008">
    <property type="entry name" value="Translation initiation factor IF-2"/>
    <property type="match status" value="1"/>
</dbReference>
<dbReference type="FunFam" id="3.30.56.50:FF:000001">
    <property type="entry name" value="Translation initiation factor IF-2"/>
    <property type="match status" value="1"/>
</dbReference>
<dbReference type="FunFam" id="3.40.50.10050:FF:000001">
    <property type="entry name" value="Translation initiation factor IF-2"/>
    <property type="match status" value="1"/>
</dbReference>
<dbReference type="FunFam" id="3.40.50.300:FF:000019">
    <property type="entry name" value="Translation initiation factor IF-2"/>
    <property type="match status" value="1"/>
</dbReference>
<dbReference type="Gene3D" id="3.40.50.300">
    <property type="entry name" value="P-loop containing nucleotide triphosphate hydrolases"/>
    <property type="match status" value="1"/>
</dbReference>
<dbReference type="Gene3D" id="3.30.56.50">
    <property type="entry name" value="Putative DNA-binding domain, N-terminal subdomain of bacterial translation initiation factor IF2"/>
    <property type="match status" value="1"/>
</dbReference>
<dbReference type="Gene3D" id="2.40.30.10">
    <property type="entry name" value="Translation factors"/>
    <property type="match status" value="2"/>
</dbReference>
<dbReference type="Gene3D" id="3.40.50.10050">
    <property type="entry name" value="Translation initiation factor IF- 2, domain 3"/>
    <property type="match status" value="1"/>
</dbReference>
<dbReference type="HAMAP" id="MF_00100_B">
    <property type="entry name" value="IF_2_B"/>
    <property type="match status" value="1"/>
</dbReference>
<dbReference type="InterPro" id="IPR009061">
    <property type="entry name" value="DNA-bd_dom_put_sf"/>
</dbReference>
<dbReference type="InterPro" id="IPR053905">
    <property type="entry name" value="EF-G-like_DII"/>
</dbReference>
<dbReference type="InterPro" id="IPR004161">
    <property type="entry name" value="EFTu-like_2"/>
</dbReference>
<dbReference type="InterPro" id="IPR013575">
    <property type="entry name" value="IF2_assoc_dom_bac"/>
</dbReference>
<dbReference type="InterPro" id="IPR044145">
    <property type="entry name" value="IF2_II"/>
</dbReference>
<dbReference type="InterPro" id="IPR006847">
    <property type="entry name" value="IF2_N"/>
</dbReference>
<dbReference type="InterPro" id="IPR027417">
    <property type="entry name" value="P-loop_NTPase"/>
</dbReference>
<dbReference type="InterPro" id="IPR005225">
    <property type="entry name" value="Small_GTP-bd"/>
</dbReference>
<dbReference type="InterPro" id="IPR000795">
    <property type="entry name" value="T_Tr_GTP-bd_dom"/>
</dbReference>
<dbReference type="InterPro" id="IPR000178">
    <property type="entry name" value="TF_IF2_bacterial-like"/>
</dbReference>
<dbReference type="InterPro" id="IPR015760">
    <property type="entry name" value="TIF_IF2"/>
</dbReference>
<dbReference type="InterPro" id="IPR023115">
    <property type="entry name" value="TIF_IF2_dom3"/>
</dbReference>
<dbReference type="InterPro" id="IPR036925">
    <property type="entry name" value="TIF_IF2_dom3_sf"/>
</dbReference>
<dbReference type="InterPro" id="IPR009000">
    <property type="entry name" value="Transl_B-barrel_sf"/>
</dbReference>
<dbReference type="NCBIfam" id="TIGR00487">
    <property type="entry name" value="IF-2"/>
    <property type="match status" value="1"/>
</dbReference>
<dbReference type="NCBIfam" id="TIGR00231">
    <property type="entry name" value="small_GTP"/>
    <property type="match status" value="1"/>
</dbReference>
<dbReference type="PANTHER" id="PTHR43381:SF5">
    <property type="entry name" value="TR-TYPE G DOMAIN-CONTAINING PROTEIN"/>
    <property type="match status" value="1"/>
</dbReference>
<dbReference type="PANTHER" id="PTHR43381">
    <property type="entry name" value="TRANSLATION INITIATION FACTOR IF-2-RELATED"/>
    <property type="match status" value="1"/>
</dbReference>
<dbReference type="Pfam" id="PF22042">
    <property type="entry name" value="EF-G_D2"/>
    <property type="match status" value="1"/>
</dbReference>
<dbReference type="Pfam" id="PF00009">
    <property type="entry name" value="GTP_EFTU"/>
    <property type="match status" value="1"/>
</dbReference>
<dbReference type="Pfam" id="PF03144">
    <property type="entry name" value="GTP_EFTU_D2"/>
    <property type="match status" value="1"/>
</dbReference>
<dbReference type="Pfam" id="PF11987">
    <property type="entry name" value="IF-2"/>
    <property type="match status" value="1"/>
</dbReference>
<dbReference type="Pfam" id="PF08364">
    <property type="entry name" value="IF2_assoc"/>
    <property type="match status" value="1"/>
</dbReference>
<dbReference type="Pfam" id="PF04760">
    <property type="entry name" value="IF2_N"/>
    <property type="match status" value="2"/>
</dbReference>
<dbReference type="SUPFAM" id="SSF52156">
    <property type="entry name" value="Initiation factor IF2/eIF5b, domain 3"/>
    <property type="match status" value="1"/>
</dbReference>
<dbReference type="SUPFAM" id="SSF52540">
    <property type="entry name" value="P-loop containing nucleoside triphosphate hydrolases"/>
    <property type="match status" value="1"/>
</dbReference>
<dbReference type="SUPFAM" id="SSF46955">
    <property type="entry name" value="Putative DNA-binding domain"/>
    <property type="match status" value="1"/>
</dbReference>
<dbReference type="SUPFAM" id="SSF50447">
    <property type="entry name" value="Translation proteins"/>
    <property type="match status" value="2"/>
</dbReference>
<dbReference type="PROSITE" id="PS51722">
    <property type="entry name" value="G_TR_2"/>
    <property type="match status" value="1"/>
</dbReference>
<dbReference type="PROSITE" id="PS01176">
    <property type="entry name" value="IF2"/>
    <property type="match status" value="1"/>
</dbReference>
<organism>
    <name type="scientific">Escherichia coli O81 (strain ED1a)</name>
    <dbReference type="NCBI Taxonomy" id="585397"/>
    <lineage>
        <taxon>Bacteria</taxon>
        <taxon>Pseudomonadati</taxon>
        <taxon>Pseudomonadota</taxon>
        <taxon>Gammaproteobacteria</taxon>
        <taxon>Enterobacterales</taxon>
        <taxon>Enterobacteriaceae</taxon>
        <taxon>Escherichia</taxon>
    </lineage>
</organism>
<accession>B7N0V3</accession>
<evidence type="ECO:0000250" key="1"/>
<evidence type="ECO:0000255" key="2">
    <source>
        <dbReference type="HAMAP-Rule" id="MF_00100"/>
    </source>
</evidence>
<evidence type="ECO:0000256" key="3">
    <source>
        <dbReference type="SAM" id="MobiDB-lite"/>
    </source>
</evidence>
<name>IF2_ECO81</name>
<sequence>MTDVTIKTLAAERQTSVERLVQQFADAGIRKSADDSVSAQEKQTLIDHLNQKNSGPDKLTLQRKTRSTLNIPGTGGKSKSVQIEVRKKRTFVKRDPQEAERLAAEEQAQREAEEQARREAEESAKREAQQKAEREAAEQAKREAAEQAKREAAEKDKVSNQQDDMTKNAQAEKARREQEAAELKRKAEEEARRKLEEEARRVAEEARRMAEENKWIDNAEPTEDSSDYHVTTSQHARQAEDESDREVEGGRGRGRNAKAARPKKGNKHAESKADREEARAAVRGGKGGKRKGSSLQQGFQKPAQAVNRDVVIGETITVGELANKMAVKGSQVIKAMMKLGAMATINQVIDQETAQLVAEEMGHKVILRRENELEEAVMSDRDTGAAAEPRAPVVTIMGHVDHGKTSLLDYIRSTKVASGEAGGITQHIGAYHVETENGMITFLDTPGHAAFTSMRARGAQATDIVVLVVAADDGVMPQTIEAIQHAKAAGVPVVVAVNKIDKPEADPDRVKNELSQYGILPEEWGGESQFVHVSAKAGTGIDELLDAILLQAEVLELKAVRKGMASGAVIESFLDKGRGPVATVLVREGTLHKGDIVLCGFEYGRVRAMRNELGQEVLEAGPSIPVEILGLSGVPAAGDEVTVVRDEKKAREVALYRQGKFREVKLARQQKSKLENMFANMTEGEVHEVNIVLKADVQGSVEAISDSLLKLSTDEVKVKIIGSGVGGITETDATLAAASNAILVGFNVRADASARKVIEAESLDLRYYSVIYNLIDEVKAAMSGMLSPELKQQIIGLAEVRDVFKSPKFGAIAGCMVTEGVVKRHNPIRVLRDNVVIYEGELESLRRFKDDVNEVRNGMECGIGVKNYNDVRTGDVIEVFEIIEIQRTIA</sequence>
<reference key="1">
    <citation type="journal article" date="2009" name="PLoS Genet.">
        <title>Organised genome dynamics in the Escherichia coli species results in highly diverse adaptive paths.</title>
        <authorList>
            <person name="Touchon M."/>
            <person name="Hoede C."/>
            <person name="Tenaillon O."/>
            <person name="Barbe V."/>
            <person name="Baeriswyl S."/>
            <person name="Bidet P."/>
            <person name="Bingen E."/>
            <person name="Bonacorsi S."/>
            <person name="Bouchier C."/>
            <person name="Bouvet O."/>
            <person name="Calteau A."/>
            <person name="Chiapello H."/>
            <person name="Clermont O."/>
            <person name="Cruveiller S."/>
            <person name="Danchin A."/>
            <person name="Diard M."/>
            <person name="Dossat C."/>
            <person name="Karoui M.E."/>
            <person name="Frapy E."/>
            <person name="Garry L."/>
            <person name="Ghigo J.M."/>
            <person name="Gilles A.M."/>
            <person name="Johnson J."/>
            <person name="Le Bouguenec C."/>
            <person name="Lescat M."/>
            <person name="Mangenot S."/>
            <person name="Martinez-Jehanne V."/>
            <person name="Matic I."/>
            <person name="Nassif X."/>
            <person name="Oztas S."/>
            <person name="Petit M.A."/>
            <person name="Pichon C."/>
            <person name="Rouy Z."/>
            <person name="Ruf C.S."/>
            <person name="Schneider D."/>
            <person name="Tourret J."/>
            <person name="Vacherie B."/>
            <person name="Vallenet D."/>
            <person name="Medigue C."/>
            <person name="Rocha E.P.C."/>
            <person name="Denamur E."/>
        </authorList>
    </citation>
    <scope>NUCLEOTIDE SEQUENCE [LARGE SCALE GENOMIC DNA]</scope>
    <source>
        <strain>ED1a</strain>
    </source>
</reference>
<protein>
    <recommendedName>
        <fullName evidence="2">Translation initiation factor IF-2</fullName>
    </recommendedName>
</protein>
<feature type="chain" id="PRO_1000118762" description="Translation initiation factor IF-2">
    <location>
        <begin position="1"/>
        <end position="890"/>
    </location>
</feature>
<feature type="domain" description="tr-type G">
    <location>
        <begin position="389"/>
        <end position="558"/>
    </location>
</feature>
<feature type="region of interest" description="Disordered" evidence="3">
    <location>
        <begin position="45"/>
        <end position="304"/>
    </location>
</feature>
<feature type="region of interest" description="G1" evidence="1">
    <location>
        <begin position="398"/>
        <end position="405"/>
    </location>
</feature>
<feature type="region of interest" description="G2" evidence="1">
    <location>
        <begin position="423"/>
        <end position="427"/>
    </location>
</feature>
<feature type="region of interest" description="G3" evidence="1">
    <location>
        <begin position="444"/>
        <end position="447"/>
    </location>
</feature>
<feature type="region of interest" description="G4" evidence="1">
    <location>
        <begin position="498"/>
        <end position="501"/>
    </location>
</feature>
<feature type="region of interest" description="G5" evidence="1">
    <location>
        <begin position="534"/>
        <end position="536"/>
    </location>
</feature>
<feature type="compositionally biased region" description="Polar residues" evidence="3">
    <location>
        <begin position="67"/>
        <end position="81"/>
    </location>
</feature>
<feature type="compositionally biased region" description="Basic and acidic residues" evidence="3">
    <location>
        <begin position="92"/>
        <end position="217"/>
    </location>
</feature>
<feature type="compositionally biased region" description="Basic residues" evidence="3">
    <location>
        <begin position="252"/>
        <end position="266"/>
    </location>
</feature>
<feature type="compositionally biased region" description="Basic and acidic residues" evidence="3">
    <location>
        <begin position="267"/>
        <end position="280"/>
    </location>
</feature>
<feature type="binding site" evidence="2">
    <location>
        <begin position="398"/>
        <end position="405"/>
    </location>
    <ligand>
        <name>GTP</name>
        <dbReference type="ChEBI" id="CHEBI:37565"/>
    </ligand>
</feature>
<feature type="binding site" evidence="2">
    <location>
        <begin position="444"/>
        <end position="448"/>
    </location>
    <ligand>
        <name>GTP</name>
        <dbReference type="ChEBI" id="CHEBI:37565"/>
    </ligand>
</feature>
<feature type="binding site" evidence="2">
    <location>
        <begin position="498"/>
        <end position="501"/>
    </location>
    <ligand>
        <name>GTP</name>
        <dbReference type="ChEBI" id="CHEBI:37565"/>
    </ligand>
</feature>
<feature type="modified residue" description="N6-acetyllysine" evidence="1">
    <location>
        <position position="808"/>
    </location>
</feature>